<keyword id="KW-0963">Cytoplasm</keyword>
<reference key="1">
    <citation type="journal article" date="2011" name="J. Bacteriol.">
        <title>Comparative genomics of 28 Salmonella enterica isolates: evidence for CRISPR-mediated adaptive sublineage evolution.</title>
        <authorList>
            <person name="Fricke W.F."/>
            <person name="Mammel M.K."/>
            <person name="McDermott P.F."/>
            <person name="Tartera C."/>
            <person name="White D.G."/>
            <person name="Leclerc J.E."/>
            <person name="Ravel J."/>
            <person name="Cebula T.A."/>
        </authorList>
    </citation>
    <scope>NUCLEOTIDE SEQUENCE [LARGE SCALE GENOMIC DNA]</scope>
    <source>
        <strain>CVM19633</strain>
    </source>
</reference>
<gene>
    <name evidence="1" type="primary">sufE</name>
    <name type="ordered locus">SeSA_A1471</name>
</gene>
<dbReference type="EMBL" id="CP001127">
    <property type="protein sequence ID" value="ACF91394.1"/>
    <property type="molecule type" value="Genomic_DNA"/>
</dbReference>
<dbReference type="RefSeq" id="WP_000729470.1">
    <property type="nucleotide sequence ID" value="NC_011094.1"/>
</dbReference>
<dbReference type="SMR" id="B4TUT6"/>
<dbReference type="KEGG" id="sew:SeSA_A1471"/>
<dbReference type="HOGENOM" id="CLU_124502_1_1_6"/>
<dbReference type="UniPathway" id="UPA00266"/>
<dbReference type="Proteomes" id="UP000001865">
    <property type="component" value="Chromosome"/>
</dbReference>
<dbReference type="GO" id="GO:0005737">
    <property type="term" value="C:cytoplasm"/>
    <property type="evidence" value="ECO:0007669"/>
    <property type="project" value="UniProtKB-SubCell"/>
</dbReference>
<dbReference type="GO" id="GO:0016226">
    <property type="term" value="P:iron-sulfur cluster assembly"/>
    <property type="evidence" value="ECO:0007669"/>
    <property type="project" value="InterPro"/>
</dbReference>
<dbReference type="GO" id="GO:0006790">
    <property type="term" value="P:sulfur compound metabolic process"/>
    <property type="evidence" value="ECO:0007669"/>
    <property type="project" value="InterPro"/>
</dbReference>
<dbReference type="Gene3D" id="3.90.1010.10">
    <property type="match status" value="1"/>
</dbReference>
<dbReference type="HAMAP" id="MF_01832">
    <property type="entry name" value="SufE"/>
    <property type="match status" value="1"/>
</dbReference>
<dbReference type="InterPro" id="IPR023939">
    <property type="entry name" value="Cysteine_desulfuration_SufE"/>
</dbReference>
<dbReference type="InterPro" id="IPR003808">
    <property type="entry name" value="Fe-S_metab-assoc_dom"/>
</dbReference>
<dbReference type="NCBIfam" id="NF006792">
    <property type="entry name" value="PRK09296.1"/>
    <property type="match status" value="1"/>
</dbReference>
<dbReference type="PANTHER" id="PTHR43597:SF3">
    <property type="entry name" value="CYSTEINE DESULFURATION PROTEIN SUFE"/>
    <property type="match status" value="1"/>
</dbReference>
<dbReference type="PANTHER" id="PTHR43597">
    <property type="entry name" value="SULFUR ACCEPTOR PROTEIN CSDE"/>
    <property type="match status" value="1"/>
</dbReference>
<dbReference type="Pfam" id="PF02657">
    <property type="entry name" value="SufE"/>
    <property type="match status" value="1"/>
</dbReference>
<dbReference type="SUPFAM" id="SSF82649">
    <property type="entry name" value="SufE/NifU"/>
    <property type="match status" value="1"/>
</dbReference>
<proteinExistence type="inferred from homology"/>
<evidence type="ECO:0000255" key="1">
    <source>
        <dbReference type="HAMAP-Rule" id="MF_01832"/>
    </source>
</evidence>
<name>SUFE_SALSV</name>
<feature type="chain" id="PRO_1000188337" description="Cysteine desulfuration protein SufE">
    <location>
        <begin position="1"/>
        <end position="138"/>
    </location>
</feature>
<feature type="active site" description="Cysteine persulfide intermediate" evidence="1">
    <location>
        <position position="51"/>
    </location>
</feature>
<organism>
    <name type="scientific">Salmonella schwarzengrund (strain CVM19633)</name>
    <dbReference type="NCBI Taxonomy" id="439843"/>
    <lineage>
        <taxon>Bacteria</taxon>
        <taxon>Pseudomonadati</taxon>
        <taxon>Pseudomonadota</taxon>
        <taxon>Gammaproteobacteria</taxon>
        <taxon>Enterobacterales</taxon>
        <taxon>Enterobacteriaceae</taxon>
        <taxon>Salmonella</taxon>
    </lineage>
</organism>
<comment type="function">
    <text evidence="1">Participates in cysteine desulfuration mediated by SufS. Cysteine desulfuration mobilizes sulfur from L-cysteine to yield L-alanine and constitutes an essential step in sulfur metabolism for biosynthesis of a variety of sulfur-containing biomolecules. Functions as a sulfur acceptor for SufS, by mediating the direct transfer of the sulfur atom from the S-sulfanylcysteine of SufS, an intermediate product of cysteine desulfuration process.</text>
</comment>
<comment type="pathway">
    <text evidence="1">Cofactor biosynthesis; iron-sulfur cluster biosynthesis.</text>
</comment>
<comment type="subunit">
    <text evidence="1">Homodimer. Interacts with SufS.</text>
</comment>
<comment type="subcellular location">
    <subcellularLocation>
        <location evidence="1">Cytoplasm</location>
    </subcellularLocation>
</comment>
<comment type="similarity">
    <text evidence="1">Belongs to the SufE family.</text>
</comment>
<sequence>MAALPDKEKLLRNFTRCANWEEKYLYIIELGQRLAELNPQDRNPQNTIHGCQSQVWIVMRRNANGIIELQGDSDAAIVKGLMAVVFILYHQMTAQDIVHFDVRPWFEKMALTQHLTPSRSQGLEAMIRAIRAKAATLS</sequence>
<accession>B4TUT6</accession>
<protein>
    <recommendedName>
        <fullName evidence="1">Cysteine desulfuration protein SufE</fullName>
    </recommendedName>
</protein>